<name>BIOF_YERP3</name>
<reference key="1">
    <citation type="journal article" date="2007" name="PLoS Genet.">
        <title>The complete genome sequence of Yersinia pseudotuberculosis IP31758, the causative agent of Far East scarlet-like fever.</title>
        <authorList>
            <person name="Eppinger M."/>
            <person name="Rosovitz M.J."/>
            <person name="Fricke W.F."/>
            <person name="Rasko D.A."/>
            <person name="Kokorina G."/>
            <person name="Fayolle C."/>
            <person name="Lindler L.E."/>
            <person name="Carniel E."/>
            <person name="Ravel J."/>
        </authorList>
    </citation>
    <scope>NUCLEOTIDE SEQUENCE [LARGE SCALE GENOMIC DNA]</scope>
    <source>
        <strain>IP 31758</strain>
    </source>
</reference>
<accession>A7FKM8</accession>
<evidence type="ECO:0000255" key="1">
    <source>
        <dbReference type="HAMAP-Rule" id="MF_01693"/>
    </source>
</evidence>
<comment type="function">
    <text evidence="1">Catalyzes the decarboxylative condensation of pimeloyl-[acyl-carrier protein] and L-alanine to produce 8-amino-7-oxononanoate (AON), [acyl-carrier protein], and carbon dioxide.</text>
</comment>
<comment type="catalytic activity">
    <reaction evidence="1">
        <text>6-carboxyhexanoyl-[ACP] + L-alanine + H(+) = (8S)-8-amino-7-oxononanoate + holo-[ACP] + CO2</text>
        <dbReference type="Rhea" id="RHEA:42288"/>
        <dbReference type="Rhea" id="RHEA-COMP:9685"/>
        <dbReference type="Rhea" id="RHEA-COMP:9955"/>
        <dbReference type="ChEBI" id="CHEBI:15378"/>
        <dbReference type="ChEBI" id="CHEBI:16526"/>
        <dbReference type="ChEBI" id="CHEBI:57972"/>
        <dbReference type="ChEBI" id="CHEBI:64479"/>
        <dbReference type="ChEBI" id="CHEBI:78846"/>
        <dbReference type="ChEBI" id="CHEBI:149468"/>
        <dbReference type="EC" id="2.3.1.47"/>
    </reaction>
</comment>
<comment type="cofactor">
    <cofactor evidence="1">
        <name>pyridoxal 5'-phosphate</name>
        <dbReference type="ChEBI" id="CHEBI:597326"/>
    </cofactor>
</comment>
<comment type="pathway">
    <text evidence="1">Cofactor biosynthesis; biotin biosynthesis.</text>
</comment>
<comment type="subunit">
    <text evidence="1">Homodimer.</text>
</comment>
<comment type="similarity">
    <text evidence="1">Belongs to the class-II pyridoxal-phosphate-dependent aminotransferase family. BioF subfamily.</text>
</comment>
<protein>
    <recommendedName>
        <fullName evidence="1">8-amino-7-oxononanoate synthase</fullName>
        <shortName evidence="1">AONS</shortName>
        <ecNumber evidence="1">2.3.1.47</ecNumber>
    </recommendedName>
    <alternativeName>
        <fullName evidence="1">7-keto-8-amino-pelargonic acid synthase</fullName>
        <shortName evidence="1">7-KAP synthase</shortName>
        <shortName evidence="1">KAPA synthase</shortName>
    </alternativeName>
    <alternativeName>
        <fullName evidence="1">8-amino-7-ketopelargonate synthase</fullName>
    </alternativeName>
</protein>
<gene>
    <name evidence="1" type="primary">bioF</name>
    <name type="ordered locus">YpsIP31758_2843</name>
</gene>
<sequence>MSWQDKIAQGLQRRRDAAAYRTRQVNEGANGRWLQSGERQYLNFSSNDYLGLSQNDEVIAAWQQGARRYGVGSGGSGHVTGYSQPHARLEQRLADWLGYPRALLFISGYAANQAVLTALTDADDRILADKLSHASLLEAAAHSPAQLRRFQHNQPEALQNLLIKPCQGQTLVVTEGVFSMDGDSAPLAALQQQTSAAGGWLLVDDAHGIGVHGEEGRGSCWLQGVQPELLVVTFGKAFGLSGAAVLCQEPVAEYLLQYARHLIYSTAMPPAQACALQAALRQVQQGDALRQQLQQRIRQFRTAAAHLPLQLGASKTAIQPLLVGDNQQSLIWAEQLRAAGLWVTAIRPPTVPPGSARLRITLSAAHQPEDIDRLLEVLYGLCH</sequence>
<organism>
    <name type="scientific">Yersinia pseudotuberculosis serotype O:1b (strain IP 31758)</name>
    <dbReference type="NCBI Taxonomy" id="349747"/>
    <lineage>
        <taxon>Bacteria</taxon>
        <taxon>Pseudomonadati</taxon>
        <taxon>Pseudomonadota</taxon>
        <taxon>Gammaproteobacteria</taxon>
        <taxon>Enterobacterales</taxon>
        <taxon>Yersiniaceae</taxon>
        <taxon>Yersinia</taxon>
    </lineage>
</organism>
<dbReference type="EC" id="2.3.1.47" evidence="1"/>
<dbReference type="EMBL" id="CP000720">
    <property type="protein sequence ID" value="ABS46149.1"/>
    <property type="molecule type" value="Genomic_DNA"/>
</dbReference>
<dbReference type="RefSeq" id="WP_012105479.1">
    <property type="nucleotide sequence ID" value="NC_009708.1"/>
</dbReference>
<dbReference type="SMR" id="A7FKM8"/>
<dbReference type="KEGG" id="ypi:YpsIP31758_2843"/>
<dbReference type="HOGENOM" id="CLU_015846_11_2_6"/>
<dbReference type="UniPathway" id="UPA00078"/>
<dbReference type="Proteomes" id="UP000002412">
    <property type="component" value="Chromosome"/>
</dbReference>
<dbReference type="GO" id="GO:0008710">
    <property type="term" value="F:8-amino-7-oxononanoate synthase activity"/>
    <property type="evidence" value="ECO:0007669"/>
    <property type="project" value="UniProtKB-UniRule"/>
</dbReference>
<dbReference type="GO" id="GO:0030170">
    <property type="term" value="F:pyridoxal phosphate binding"/>
    <property type="evidence" value="ECO:0007669"/>
    <property type="project" value="UniProtKB-UniRule"/>
</dbReference>
<dbReference type="GO" id="GO:0009102">
    <property type="term" value="P:biotin biosynthetic process"/>
    <property type="evidence" value="ECO:0007669"/>
    <property type="project" value="UniProtKB-UniRule"/>
</dbReference>
<dbReference type="Gene3D" id="3.90.1150.10">
    <property type="entry name" value="Aspartate Aminotransferase, domain 1"/>
    <property type="match status" value="1"/>
</dbReference>
<dbReference type="Gene3D" id="3.40.640.10">
    <property type="entry name" value="Type I PLP-dependent aspartate aminotransferase-like (Major domain)"/>
    <property type="match status" value="1"/>
</dbReference>
<dbReference type="HAMAP" id="MF_01693">
    <property type="entry name" value="BioF_aminotrans_2"/>
    <property type="match status" value="1"/>
</dbReference>
<dbReference type="InterPro" id="IPR001917">
    <property type="entry name" value="Aminotrans_II_pyridoxalP_BS"/>
</dbReference>
<dbReference type="InterPro" id="IPR004839">
    <property type="entry name" value="Aminotransferase_I/II_large"/>
</dbReference>
<dbReference type="InterPro" id="IPR050087">
    <property type="entry name" value="AON_synthase_class-II"/>
</dbReference>
<dbReference type="InterPro" id="IPR004723">
    <property type="entry name" value="AONS_Archaea/Proteobacteria"/>
</dbReference>
<dbReference type="InterPro" id="IPR022834">
    <property type="entry name" value="AONS_Proteobacteria"/>
</dbReference>
<dbReference type="InterPro" id="IPR015424">
    <property type="entry name" value="PyrdxlP-dep_Trfase"/>
</dbReference>
<dbReference type="InterPro" id="IPR015421">
    <property type="entry name" value="PyrdxlP-dep_Trfase_major"/>
</dbReference>
<dbReference type="InterPro" id="IPR015422">
    <property type="entry name" value="PyrdxlP-dep_Trfase_small"/>
</dbReference>
<dbReference type="NCBIfam" id="TIGR00858">
    <property type="entry name" value="bioF"/>
    <property type="match status" value="1"/>
</dbReference>
<dbReference type="PANTHER" id="PTHR13693:SF100">
    <property type="entry name" value="8-AMINO-7-OXONONANOATE SYNTHASE"/>
    <property type="match status" value="1"/>
</dbReference>
<dbReference type="PANTHER" id="PTHR13693">
    <property type="entry name" value="CLASS II AMINOTRANSFERASE/8-AMINO-7-OXONONANOATE SYNTHASE"/>
    <property type="match status" value="1"/>
</dbReference>
<dbReference type="Pfam" id="PF00155">
    <property type="entry name" value="Aminotran_1_2"/>
    <property type="match status" value="1"/>
</dbReference>
<dbReference type="SUPFAM" id="SSF53383">
    <property type="entry name" value="PLP-dependent transferases"/>
    <property type="match status" value="1"/>
</dbReference>
<dbReference type="PROSITE" id="PS00599">
    <property type="entry name" value="AA_TRANSFER_CLASS_2"/>
    <property type="match status" value="1"/>
</dbReference>
<proteinExistence type="inferred from homology"/>
<keyword id="KW-0093">Biotin biosynthesis</keyword>
<keyword id="KW-0663">Pyridoxal phosphate</keyword>
<keyword id="KW-0808">Transferase</keyword>
<feature type="chain" id="PRO_0000381153" description="8-amino-7-oxononanoate synthase">
    <location>
        <begin position="1"/>
        <end position="383"/>
    </location>
</feature>
<feature type="binding site" evidence="1">
    <location>
        <position position="21"/>
    </location>
    <ligand>
        <name>substrate</name>
    </ligand>
</feature>
<feature type="binding site" evidence="1">
    <location>
        <begin position="108"/>
        <end position="109"/>
    </location>
    <ligand>
        <name>pyridoxal 5'-phosphate</name>
        <dbReference type="ChEBI" id="CHEBI:597326"/>
    </ligand>
</feature>
<feature type="binding site" evidence="1">
    <location>
        <position position="133"/>
    </location>
    <ligand>
        <name>substrate</name>
    </ligand>
</feature>
<feature type="binding site" evidence="1">
    <location>
        <position position="179"/>
    </location>
    <ligand>
        <name>pyridoxal 5'-phosphate</name>
        <dbReference type="ChEBI" id="CHEBI:597326"/>
    </ligand>
</feature>
<feature type="binding site" evidence="1">
    <location>
        <position position="207"/>
    </location>
    <ligand>
        <name>pyridoxal 5'-phosphate</name>
        <dbReference type="ChEBI" id="CHEBI:597326"/>
    </ligand>
</feature>
<feature type="binding site" evidence="1">
    <location>
        <position position="233"/>
    </location>
    <ligand>
        <name>pyridoxal 5'-phosphate</name>
        <dbReference type="ChEBI" id="CHEBI:597326"/>
    </ligand>
</feature>
<feature type="binding site" evidence="1">
    <location>
        <position position="350"/>
    </location>
    <ligand>
        <name>substrate</name>
    </ligand>
</feature>
<feature type="modified residue" description="N6-(pyridoxal phosphate)lysine" evidence="1">
    <location>
        <position position="236"/>
    </location>
</feature>